<sequence>MSKRDYYEVLGVAKNASDEEIKKAYRKLAMKHHPDRNPGDHAAEDKFKEAKQAYEILSDSDKRAAYDQFGHAGVDPQSGMGGGGFGGGGFSDAFSDIFGDIFGGGGGNRRDRVYRGADLRYNLEIGLEEAARGTETKIRIPTLEECGTCHGSGAKPGTQPTTCSACGGHGQVRVQQGFFSVQQTCPRCGGTGKMVSDPCPSCHGEGRVKKHKTLSVKIPAGVDSGDRIRLAGEGEAGVNGGPSGDLYVVIHLKDHPVFKRDGDDLHCEMPISFATAALGGEVEIPTLDGHAKIKIPAETQSGKVFRLRGKGIKGVRSHAPGDLLCHMLVETPVNLSERQRELLREFEALSPGRNNNPRAQSFMDKVKSFFGT</sequence>
<comment type="function">
    <text evidence="1">Participates actively in the response to hyperosmotic and heat shock by preventing the aggregation of stress-denatured proteins and by disaggregating proteins, also in an autonomous, DnaK-independent fashion. Unfolded proteins bind initially to DnaJ; upon interaction with the DnaJ-bound protein, DnaK hydrolyzes its bound ATP, resulting in the formation of a stable complex. GrpE releases ADP from DnaK; ATP binding to DnaK triggers the release of the substrate protein, thus completing the reaction cycle. Several rounds of ATP-dependent interactions between DnaJ, DnaK and GrpE are required for fully efficient folding. Also involved, together with DnaK and GrpE, in the DNA replication of plasmids through activation of initiation proteins.</text>
</comment>
<comment type="cofactor">
    <cofactor evidence="1">
        <name>Zn(2+)</name>
        <dbReference type="ChEBI" id="CHEBI:29105"/>
    </cofactor>
    <text evidence="1">Binds 2 Zn(2+) ions per monomer.</text>
</comment>
<comment type="subunit">
    <text evidence="1">Homodimer.</text>
</comment>
<comment type="subcellular location">
    <subcellularLocation>
        <location evidence="1">Cytoplasm</location>
    </subcellularLocation>
</comment>
<comment type="domain">
    <text evidence="1">The J domain is necessary and sufficient to stimulate DnaK ATPase activity. Zinc center 1 plays an important role in the autonomous, DnaK-independent chaperone activity of DnaJ. Zinc center 2 is essential for interaction with DnaK and for DnaJ activity.</text>
</comment>
<comment type="similarity">
    <text evidence="1">Belongs to the DnaJ family.</text>
</comment>
<keyword id="KW-0143">Chaperone</keyword>
<keyword id="KW-0963">Cytoplasm</keyword>
<keyword id="KW-0235">DNA replication</keyword>
<keyword id="KW-0479">Metal-binding</keyword>
<keyword id="KW-1185">Reference proteome</keyword>
<keyword id="KW-0677">Repeat</keyword>
<keyword id="KW-0346">Stress response</keyword>
<keyword id="KW-0862">Zinc</keyword>
<keyword id="KW-0863">Zinc-finger</keyword>
<reference key="1">
    <citation type="journal article" date="2006" name="J. Bacteriol.">
        <title>The genome sequence of the obligately chemolithoautotrophic, facultatively anaerobic bacterium Thiobacillus denitrificans.</title>
        <authorList>
            <person name="Beller H.R."/>
            <person name="Chain P.S."/>
            <person name="Letain T.E."/>
            <person name="Chakicherla A."/>
            <person name="Larimer F.W."/>
            <person name="Richardson P.M."/>
            <person name="Coleman M.A."/>
            <person name="Wood A.P."/>
            <person name="Kelly D.P."/>
        </authorList>
    </citation>
    <scope>NUCLEOTIDE SEQUENCE [LARGE SCALE GENOMIC DNA]</scope>
    <source>
        <strain>ATCC 25259 / T1</strain>
    </source>
</reference>
<dbReference type="EMBL" id="CP000116">
    <property type="protein sequence ID" value="AAZ97492.1"/>
    <property type="molecule type" value="Genomic_DNA"/>
</dbReference>
<dbReference type="RefSeq" id="WP_011312051.1">
    <property type="nucleotide sequence ID" value="NC_007404.1"/>
</dbReference>
<dbReference type="SMR" id="Q3SIN3"/>
<dbReference type="STRING" id="292415.Tbd_1539"/>
<dbReference type="KEGG" id="tbd:Tbd_1539"/>
<dbReference type="eggNOG" id="COG0484">
    <property type="taxonomic scope" value="Bacteria"/>
</dbReference>
<dbReference type="HOGENOM" id="CLU_017633_0_7_4"/>
<dbReference type="OrthoDB" id="9779889at2"/>
<dbReference type="Proteomes" id="UP000008291">
    <property type="component" value="Chromosome"/>
</dbReference>
<dbReference type="GO" id="GO:0005737">
    <property type="term" value="C:cytoplasm"/>
    <property type="evidence" value="ECO:0007669"/>
    <property type="project" value="UniProtKB-SubCell"/>
</dbReference>
<dbReference type="GO" id="GO:0005524">
    <property type="term" value="F:ATP binding"/>
    <property type="evidence" value="ECO:0007669"/>
    <property type="project" value="InterPro"/>
</dbReference>
<dbReference type="GO" id="GO:0031072">
    <property type="term" value="F:heat shock protein binding"/>
    <property type="evidence" value="ECO:0007669"/>
    <property type="project" value="InterPro"/>
</dbReference>
<dbReference type="GO" id="GO:0051082">
    <property type="term" value="F:unfolded protein binding"/>
    <property type="evidence" value="ECO:0007669"/>
    <property type="project" value="UniProtKB-UniRule"/>
</dbReference>
<dbReference type="GO" id="GO:0008270">
    <property type="term" value="F:zinc ion binding"/>
    <property type="evidence" value="ECO:0007669"/>
    <property type="project" value="UniProtKB-UniRule"/>
</dbReference>
<dbReference type="GO" id="GO:0051085">
    <property type="term" value="P:chaperone cofactor-dependent protein refolding"/>
    <property type="evidence" value="ECO:0007669"/>
    <property type="project" value="TreeGrafter"/>
</dbReference>
<dbReference type="GO" id="GO:0006260">
    <property type="term" value="P:DNA replication"/>
    <property type="evidence" value="ECO:0007669"/>
    <property type="project" value="UniProtKB-KW"/>
</dbReference>
<dbReference type="GO" id="GO:0042026">
    <property type="term" value="P:protein refolding"/>
    <property type="evidence" value="ECO:0007669"/>
    <property type="project" value="TreeGrafter"/>
</dbReference>
<dbReference type="GO" id="GO:0009408">
    <property type="term" value="P:response to heat"/>
    <property type="evidence" value="ECO:0007669"/>
    <property type="project" value="InterPro"/>
</dbReference>
<dbReference type="CDD" id="cd06257">
    <property type="entry name" value="DnaJ"/>
    <property type="match status" value="1"/>
</dbReference>
<dbReference type="CDD" id="cd10747">
    <property type="entry name" value="DnaJ_C"/>
    <property type="match status" value="1"/>
</dbReference>
<dbReference type="CDD" id="cd10719">
    <property type="entry name" value="DnaJ_zf"/>
    <property type="match status" value="1"/>
</dbReference>
<dbReference type="FunFam" id="1.10.287.110:FF:000031">
    <property type="entry name" value="Molecular chaperone DnaJ"/>
    <property type="match status" value="1"/>
</dbReference>
<dbReference type="FunFam" id="2.10.230.10:FF:000002">
    <property type="entry name" value="Molecular chaperone DnaJ"/>
    <property type="match status" value="1"/>
</dbReference>
<dbReference type="FunFam" id="2.60.260.20:FF:000004">
    <property type="entry name" value="Molecular chaperone DnaJ"/>
    <property type="match status" value="1"/>
</dbReference>
<dbReference type="FunFam" id="2.60.260.20:FF:000009">
    <property type="entry name" value="Putative Mitochondrial DnaJ chaperone"/>
    <property type="match status" value="1"/>
</dbReference>
<dbReference type="Gene3D" id="1.10.287.110">
    <property type="entry name" value="DnaJ domain"/>
    <property type="match status" value="1"/>
</dbReference>
<dbReference type="Gene3D" id="2.10.230.10">
    <property type="entry name" value="Heat shock protein DnaJ, cysteine-rich domain"/>
    <property type="match status" value="1"/>
</dbReference>
<dbReference type="Gene3D" id="2.60.260.20">
    <property type="entry name" value="Urease metallochaperone UreE, N-terminal domain"/>
    <property type="match status" value="2"/>
</dbReference>
<dbReference type="HAMAP" id="MF_01152">
    <property type="entry name" value="DnaJ"/>
    <property type="match status" value="1"/>
</dbReference>
<dbReference type="InterPro" id="IPR012724">
    <property type="entry name" value="DnaJ"/>
</dbReference>
<dbReference type="InterPro" id="IPR002939">
    <property type="entry name" value="DnaJ_C"/>
</dbReference>
<dbReference type="InterPro" id="IPR001623">
    <property type="entry name" value="DnaJ_domain"/>
</dbReference>
<dbReference type="InterPro" id="IPR018253">
    <property type="entry name" value="DnaJ_domain_CS"/>
</dbReference>
<dbReference type="InterPro" id="IPR008971">
    <property type="entry name" value="HSP40/DnaJ_pept-bd"/>
</dbReference>
<dbReference type="InterPro" id="IPR001305">
    <property type="entry name" value="HSP_DnaJ_Cys-rich_dom"/>
</dbReference>
<dbReference type="InterPro" id="IPR036410">
    <property type="entry name" value="HSP_DnaJ_Cys-rich_dom_sf"/>
</dbReference>
<dbReference type="InterPro" id="IPR036869">
    <property type="entry name" value="J_dom_sf"/>
</dbReference>
<dbReference type="NCBIfam" id="TIGR02349">
    <property type="entry name" value="DnaJ_bact"/>
    <property type="match status" value="1"/>
</dbReference>
<dbReference type="NCBIfam" id="NF008035">
    <property type="entry name" value="PRK10767.1"/>
    <property type="match status" value="1"/>
</dbReference>
<dbReference type="PANTHER" id="PTHR43096:SF48">
    <property type="entry name" value="CHAPERONE PROTEIN DNAJ"/>
    <property type="match status" value="1"/>
</dbReference>
<dbReference type="PANTHER" id="PTHR43096">
    <property type="entry name" value="DNAJ HOMOLOG 1, MITOCHONDRIAL-RELATED"/>
    <property type="match status" value="1"/>
</dbReference>
<dbReference type="Pfam" id="PF00226">
    <property type="entry name" value="DnaJ"/>
    <property type="match status" value="1"/>
</dbReference>
<dbReference type="Pfam" id="PF01556">
    <property type="entry name" value="DnaJ_C"/>
    <property type="match status" value="1"/>
</dbReference>
<dbReference type="Pfam" id="PF00684">
    <property type="entry name" value="DnaJ_CXXCXGXG"/>
    <property type="match status" value="1"/>
</dbReference>
<dbReference type="PRINTS" id="PR00625">
    <property type="entry name" value="JDOMAIN"/>
</dbReference>
<dbReference type="SMART" id="SM00271">
    <property type="entry name" value="DnaJ"/>
    <property type="match status" value="1"/>
</dbReference>
<dbReference type="SUPFAM" id="SSF46565">
    <property type="entry name" value="Chaperone J-domain"/>
    <property type="match status" value="1"/>
</dbReference>
<dbReference type="SUPFAM" id="SSF57938">
    <property type="entry name" value="DnaJ/Hsp40 cysteine-rich domain"/>
    <property type="match status" value="1"/>
</dbReference>
<dbReference type="SUPFAM" id="SSF49493">
    <property type="entry name" value="HSP40/DnaJ peptide-binding domain"/>
    <property type="match status" value="2"/>
</dbReference>
<dbReference type="PROSITE" id="PS00636">
    <property type="entry name" value="DNAJ_1"/>
    <property type="match status" value="1"/>
</dbReference>
<dbReference type="PROSITE" id="PS50076">
    <property type="entry name" value="DNAJ_2"/>
    <property type="match status" value="1"/>
</dbReference>
<dbReference type="PROSITE" id="PS51188">
    <property type="entry name" value="ZF_CR"/>
    <property type="match status" value="1"/>
</dbReference>
<protein>
    <recommendedName>
        <fullName evidence="1">Chaperone protein DnaJ</fullName>
    </recommendedName>
</protein>
<feature type="chain" id="PRO_1000085324" description="Chaperone protein DnaJ">
    <location>
        <begin position="1"/>
        <end position="372"/>
    </location>
</feature>
<feature type="domain" description="J" evidence="1">
    <location>
        <begin position="5"/>
        <end position="70"/>
    </location>
</feature>
<feature type="repeat" description="CXXCXGXG motif">
    <location>
        <begin position="146"/>
        <end position="153"/>
    </location>
</feature>
<feature type="repeat" description="CXXCXGXG motif">
    <location>
        <begin position="163"/>
        <end position="170"/>
    </location>
</feature>
<feature type="repeat" description="CXXCXGXG motif">
    <location>
        <begin position="185"/>
        <end position="192"/>
    </location>
</feature>
<feature type="repeat" description="CXXCXGXG motif">
    <location>
        <begin position="199"/>
        <end position="206"/>
    </location>
</feature>
<feature type="zinc finger region" description="CR-type" evidence="1">
    <location>
        <begin position="133"/>
        <end position="211"/>
    </location>
</feature>
<feature type="binding site" evidence="1">
    <location>
        <position position="146"/>
    </location>
    <ligand>
        <name>Zn(2+)</name>
        <dbReference type="ChEBI" id="CHEBI:29105"/>
        <label>1</label>
    </ligand>
</feature>
<feature type="binding site" evidence="1">
    <location>
        <position position="149"/>
    </location>
    <ligand>
        <name>Zn(2+)</name>
        <dbReference type="ChEBI" id="CHEBI:29105"/>
        <label>1</label>
    </ligand>
</feature>
<feature type="binding site" evidence="1">
    <location>
        <position position="163"/>
    </location>
    <ligand>
        <name>Zn(2+)</name>
        <dbReference type="ChEBI" id="CHEBI:29105"/>
        <label>2</label>
    </ligand>
</feature>
<feature type="binding site" evidence="1">
    <location>
        <position position="166"/>
    </location>
    <ligand>
        <name>Zn(2+)</name>
        <dbReference type="ChEBI" id="CHEBI:29105"/>
        <label>2</label>
    </ligand>
</feature>
<feature type="binding site" evidence="1">
    <location>
        <position position="185"/>
    </location>
    <ligand>
        <name>Zn(2+)</name>
        <dbReference type="ChEBI" id="CHEBI:29105"/>
        <label>2</label>
    </ligand>
</feature>
<feature type="binding site" evidence="1">
    <location>
        <position position="188"/>
    </location>
    <ligand>
        <name>Zn(2+)</name>
        <dbReference type="ChEBI" id="CHEBI:29105"/>
        <label>2</label>
    </ligand>
</feature>
<feature type="binding site" evidence="1">
    <location>
        <position position="199"/>
    </location>
    <ligand>
        <name>Zn(2+)</name>
        <dbReference type="ChEBI" id="CHEBI:29105"/>
        <label>1</label>
    </ligand>
</feature>
<feature type="binding site" evidence="1">
    <location>
        <position position="202"/>
    </location>
    <ligand>
        <name>Zn(2+)</name>
        <dbReference type="ChEBI" id="CHEBI:29105"/>
        <label>1</label>
    </ligand>
</feature>
<evidence type="ECO:0000255" key="1">
    <source>
        <dbReference type="HAMAP-Rule" id="MF_01152"/>
    </source>
</evidence>
<accession>Q3SIN3</accession>
<organism>
    <name type="scientific">Thiobacillus denitrificans (strain ATCC 25259 / T1)</name>
    <dbReference type="NCBI Taxonomy" id="292415"/>
    <lineage>
        <taxon>Bacteria</taxon>
        <taxon>Pseudomonadati</taxon>
        <taxon>Pseudomonadota</taxon>
        <taxon>Betaproteobacteria</taxon>
        <taxon>Nitrosomonadales</taxon>
        <taxon>Thiobacillaceae</taxon>
        <taxon>Thiobacillus</taxon>
    </lineage>
</organism>
<gene>
    <name evidence="1" type="primary">dnaJ</name>
    <name type="ordered locus">Tbd_1539</name>
</gene>
<name>DNAJ_THIDA</name>
<proteinExistence type="inferred from homology"/>